<organism>
    <name type="scientific">Pediococcus pentosaceus (strain ATCC 25745 / CCUG 21536 / LMG 10740 / 183-1w)</name>
    <dbReference type="NCBI Taxonomy" id="278197"/>
    <lineage>
        <taxon>Bacteria</taxon>
        <taxon>Bacillati</taxon>
        <taxon>Bacillota</taxon>
        <taxon>Bacilli</taxon>
        <taxon>Lactobacillales</taxon>
        <taxon>Lactobacillaceae</taxon>
        <taxon>Pediococcus</taxon>
    </lineage>
</organism>
<name>RPOA_PEDPA</name>
<proteinExistence type="inferred from homology"/>
<keyword id="KW-0240">DNA-directed RNA polymerase</keyword>
<keyword id="KW-0548">Nucleotidyltransferase</keyword>
<keyword id="KW-0804">Transcription</keyword>
<keyword id="KW-0808">Transferase</keyword>
<evidence type="ECO:0000255" key="1">
    <source>
        <dbReference type="HAMAP-Rule" id="MF_00059"/>
    </source>
</evidence>
<protein>
    <recommendedName>
        <fullName evidence="1">DNA-directed RNA polymerase subunit alpha</fullName>
        <shortName evidence="1">RNAP subunit alpha</shortName>
        <ecNumber evidence="1">2.7.7.6</ecNumber>
    </recommendedName>
    <alternativeName>
        <fullName evidence="1">RNA polymerase subunit alpha</fullName>
    </alternativeName>
    <alternativeName>
        <fullName evidence="1">Transcriptase subunit alpha</fullName>
    </alternativeName>
</protein>
<comment type="function">
    <text evidence="1">DNA-dependent RNA polymerase catalyzes the transcription of DNA into RNA using the four ribonucleoside triphosphates as substrates.</text>
</comment>
<comment type="catalytic activity">
    <reaction evidence="1">
        <text>RNA(n) + a ribonucleoside 5'-triphosphate = RNA(n+1) + diphosphate</text>
        <dbReference type="Rhea" id="RHEA:21248"/>
        <dbReference type="Rhea" id="RHEA-COMP:14527"/>
        <dbReference type="Rhea" id="RHEA-COMP:17342"/>
        <dbReference type="ChEBI" id="CHEBI:33019"/>
        <dbReference type="ChEBI" id="CHEBI:61557"/>
        <dbReference type="ChEBI" id="CHEBI:140395"/>
        <dbReference type="EC" id="2.7.7.6"/>
    </reaction>
</comment>
<comment type="subunit">
    <text evidence="1">Homodimer. The RNAP catalytic core consists of 2 alpha, 1 beta, 1 beta' and 1 omega subunit. When a sigma factor is associated with the core the holoenzyme is formed, which can initiate transcription.</text>
</comment>
<comment type="domain">
    <text evidence="1">The N-terminal domain is essential for RNAP assembly and basal transcription, whereas the C-terminal domain is involved in interaction with transcriptional regulators and with upstream promoter elements.</text>
</comment>
<comment type="similarity">
    <text evidence="1">Belongs to the RNA polymerase alpha chain family.</text>
</comment>
<dbReference type="EC" id="2.7.7.6" evidence="1"/>
<dbReference type="EMBL" id="CP000422">
    <property type="protein sequence ID" value="ABJ68430.1"/>
    <property type="molecule type" value="Genomic_DNA"/>
</dbReference>
<dbReference type="RefSeq" id="WP_002833352.1">
    <property type="nucleotide sequence ID" value="NC_008525.1"/>
</dbReference>
<dbReference type="SMR" id="Q03EE2"/>
<dbReference type="STRING" id="278197.PEPE_1392"/>
<dbReference type="GeneID" id="33061255"/>
<dbReference type="KEGG" id="ppe:PEPE_1392"/>
<dbReference type="eggNOG" id="COG0202">
    <property type="taxonomic scope" value="Bacteria"/>
</dbReference>
<dbReference type="HOGENOM" id="CLU_053084_0_1_9"/>
<dbReference type="OrthoDB" id="9805706at2"/>
<dbReference type="Proteomes" id="UP000000773">
    <property type="component" value="Chromosome"/>
</dbReference>
<dbReference type="GO" id="GO:0005737">
    <property type="term" value="C:cytoplasm"/>
    <property type="evidence" value="ECO:0007669"/>
    <property type="project" value="UniProtKB-ARBA"/>
</dbReference>
<dbReference type="GO" id="GO:0000428">
    <property type="term" value="C:DNA-directed RNA polymerase complex"/>
    <property type="evidence" value="ECO:0007669"/>
    <property type="project" value="UniProtKB-KW"/>
</dbReference>
<dbReference type="GO" id="GO:0003677">
    <property type="term" value="F:DNA binding"/>
    <property type="evidence" value="ECO:0007669"/>
    <property type="project" value="UniProtKB-UniRule"/>
</dbReference>
<dbReference type="GO" id="GO:0003899">
    <property type="term" value="F:DNA-directed RNA polymerase activity"/>
    <property type="evidence" value="ECO:0007669"/>
    <property type="project" value="UniProtKB-UniRule"/>
</dbReference>
<dbReference type="GO" id="GO:0046983">
    <property type="term" value="F:protein dimerization activity"/>
    <property type="evidence" value="ECO:0007669"/>
    <property type="project" value="InterPro"/>
</dbReference>
<dbReference type="GO" id="GO:0006351">
    <property type="term" value="P:DNA-templated transcription"/>
    <property type="evidence" value="ECO:0007669"/>
    <property type="project" value="UniProtKB-UniRule"/>
</dbReference>
<dbReference type="CDD" id="cd06928">
    <property type="entry name" value="RNAP_alpha_NTD"/>
    <property type="match status" value="1"/>
</dbReference>
<dbReference type="FunFam" id="2.170.120.12:FF:000001">
    <property type="entry name" value="DNA-directed RNA polymerase subunit alpha"/>
    <property type="match status" value="1"/>
</dbReference>
<dbReference type="Gene3D" id="1.10.150.20">
    <property type="entry name" value="5' to 3' exonuclease, C-terminal subdomain"/>
    <property type="match status" value="1"/>
</dbReference>
<dbReference type="Gene3D" id="2.170.120.12">
    <property type="entry name" value="DNA-directed RNA polymerase, insert domain"/>
    <property type="match status" value="1"/>
</dbReference>
<dbReference type="Gene3D" id="3.30.1360.10">
    <property type="entry name" value="RNA polymerase, RBP11-like subunit"/>
    <property type="match status" value="1"/>
</dbReference>
<dbReference type="HAMAP" id="MF_00059">
    <property type="entry name" value="RNApol_bact_RpoA"/>
    <property type="match status" value="1"/>
</dbReference>
<dbReference type="InterPro" id="IPR011262">
    <property type="entry name" value="DNA-dir_RNA_pol_insert"/>
</dbReference>
<dbReference type="InterPro" id="IPR011263">
    <property type="entry name" value="DNA-dir_RNA_pol_RpoA/D/Rpb3"/>
</dbReference>
<dbReference type="InterPro" id="IPR011773">
    <property type="entry name" value="DNA-dir_RpoA"/>
</dbReference>
<dbReference type="InterPro" id="IPR036603">
    <property type="entry name" value="RBP11-like"/>
</dbReference>
<dbReference type="InterPro" id="IPR011260">
    <property type="entry name" value="RNAP_asu_C"/>
</dbReference>
<dbReference type="InterPro" id="IPR036643">
    <property type="entry name" value="RNApol_insert_sf"/>
</dbReference>
<dbReference type="NCBIfam" id="NF003513">
    <property type="entry name" value="PRK05182.1-2"/>
    <property type="match status" value="1"/>
</dbReference>
<dbReference type="NCBIfam" id="NF003515">
    <property type="entry name" value="PRK05182.2-1"/>
    <property type="match status" value="1"/>
</dbReference>
<dbReference type="NCBIfam" id="NF003519">
    <property type="entry name" value="PRK05182.2-5"/>
    <property type="match status" value="1"/>
</dbReference>
<dbReference type="NCBIfam" id="TIGR02027">
    <property type="entry name" value="rpoA"/>
    <property type="match status" value="1"/>
</dbReference>
<dbReference type="Pfam" id="PF01000">
    <property type="entry name" value="RNA_pol_A_bac"/>
    <property type="match status" value="1"/>
</dbReference>
<dbReference type="Pfam" id="PF03118">
    <property type="entry name" value="RNA_pol_A_CTD"/>
    <property type="match status" value="1"/>
</dbReference>
<dbReference type="Pfam" id="PF01193">
    <property type="entry name" value="RNA_pol_L"/>
    <property type="match status" value="1"/>
</dbReference>
<dbReference type="SMART" id="SM00662">
    <property type="entry name" value="RPOLD"/>
    <property type="match status" value="1"/>
</dbReference>
<dbReference type="SUPFAM" id="SSF47789">
    <property type="entry name" value="C-terminal domain of RNA polymerase alpha subunit"/>
    <property type="match status" value="1"/>
</dbReference>
<dbReference type="SUPFAM" id="SSF56553">
    <property type="entry name" value="Insert subdomain of RNA polymerase alpha subunit"/>
    <property type="match status" value="1"/>
</dbReference>
<dbReference type="SUPFAM" id="SSF55257">
    <property type="entry name" value="RBP11-like subunits of RNA polymerase"/>
    <property type="match status" value="1"/>
</dbReference>
<sequence>MIEFEKPKIHKIDENDNYGRFVIEPLERGYGTTLGNSLRRILLSSLPGAAITSVQIDSVLHEFSTIEGVVEDVTQIILNLKKVSLKIESDEDKTLEINVAGPANVTAGDIMGDGDVVILNPELPICTVAEGTTFHAVLTADTGRGYTSADENKARKVDMPIGVLPIDSIYTPIERVNYQVENTRVGQRDDYDKLTLDIWTDGSITPSEATSLSAKILTEHLAIFVNLNDQAKETEIMVEKEETHKEKMLEMTIEELDLSVRSYNCLKRAGINSVQELTDRTDAQMMKVRNLGRKSLVEIQEKLSLLGLGFRSED</sequence>
<gene>
    <name evidence="1" type="primary">rpoA</name>
    <name type="ordered locus">PEPE_1392</name>
</gene>
<reference key="1">
    <citation type="journal article" date="2006" name="Proc. Natl. Acad. Sci. U.S.A.">
        <title>Comparative genomics of the lactic acid bacteria.</title>
        <authorList>
            <person name="Makarova K.S."/>
            <person name="Slesarev A."/>
            <person name="Wolf Y.I."/>
            <person name="Sorokin A."/>
            <person name="Mirkin B."/>
            <person name="Koonin E.V."/>
            <person name="Pavlov A."/>
            <person name="Pavlova N."/>
            <person name="Karamychev V."/>
            <person name="Polouchine N."/>
            <person name="Shakhova V."/>
            <person name="Grigoriev I."/>
            <person name="Lou Y."/>
            <person name="Rohksar D."/>
            <person name="Lucas S."/>
            <person name="Huang K."/>
            <person name="Goodstein D.M."/>
            <person name="Hawkins T."/>
            <person name="Plengvidhya V."/>
            <person name="Welker D."/>
            <person name="Hughes J."/>
            <person name="Goh Y."/>
            <person name="Benson A."/>
            <person name="Baldwin K."/>
            <person name="Lee J.-H."/>
            <person name="Diaz-Muniz I."/>
            <person name="Dosti B."/>
            <person name="Smeianov V."/>
            <person name="Wechter W."/>
            <person name="Barabote R."/>
            <person name="Lorca G."/>
            <person name="Altermann E."/>
            <person name="Barrangou R."/>
            <person name="Ganesan B."/>
            <person name="Xie Y."/>
            <person name="Rawsthorne H."/>
            <person name="Tamir D."/>
            <person name="Parker C."/>
            <person name="Breidt F."/>
            <person name="Broadbent J.R."/>
            <person name="Hutkins R."/>
            <person name="O'Sullivan D."/>
            <person name="Steele J."/>
            <person name="Unlu G."/>
            <person name="Saier M.H. Jr."/>
            <person name="Klaenhammer T."/>
            <person name="Richardson P."/>
            <person name="Kozyavkin S."/>
            <person name="Weimer B.C."/>
            <person name="Mills D.A."/>
        </authorList>
    </citation>
    <scope>NUCLEOTIDE SEQUENCE [LARGE SCALE GENOMIC DNA]</scope>
    <source>
        <strain>ATCC 25745 / CCUG 21536 / LMG 10740 / 183-1w</strain>
    </source>
</reference>
<accession>Q03EE2</accession>
<feature type="chain" id="PRO_0000296847" description="DNA-directed RNA polymerase subunit alpha">
    <location>
        <begin position="1"/>
        <end position="314"/>
    </location>
</feature>
<feature type="region of interest" description="Alpha N-terminal domain (alpha-NTD)" evidence="1">
    <location>
        <begin position="1"/>
        <end position="228"/>
    </location>
</feature>
<feature type="region of interest" description="Alpha C-terminal domain (alpha-CTD)" evidence="1">
    <location>
        <begin position="245"/>
        <end position="314"/>
    </location>
</feature>